<dbReference type="EC" id="2.3.1.178"/>
<dbReference type="EMBL" id="AL939110">
    <property type="protein sequence ID" value="CAC38799.1"/>
    <property type="molecule type" value="Genomic_DNA"/>
</dbReference>
<dbReference type="RefSeq" id="NP_626131.1">
    <property type="nucleotide sequence ID" value="NC_003888.3"/>
</dbReference>
<dbReference type="RefSeq" id="WP_003976956.1">
    <property type="nucleotide sequence ID" value="NZ_VNID01000001.1"/>
</dbReference>
<dbReference type="SMR" id="Q93RW2"/>
<dbReference type="STRING" id="100226.gene:17759461"/>
<dbReference type="PaxDb" id="100226-SCO1864"/>
<dbReference type="GeneID" id="91387158"/>
<dbReference type="KEGG" id="sco:SCO1864"/>
<dbReference type="PATRIC" id="fig|100226.15.peg.1889"/>
<dbReference type="eggNOG" id="COG0456">
    <property type="taxonomic scope" value="Bacteria"/>
</dbReference>
<dbReference type="HOGENOM" id="CLU_111896_0_0_11"/>
<dbReference type="InParanoid" id="Q93RW2"/>
<dbReference type="OrthoDB" id="2436196at2"/>
<dbReference type="PhylomeDB" id="Q93RW2"/>
<dbReference type="UniPathway" id="UPA00067">
    <property type="reaction ID" value="UER00122"/>
</dbReference>
<dbReference type="Proteomes" id="UP000001973">
    <property type="component" value="Chromosome"/>
</dbReference>
<dbReference type="GO" id="GO:0016747">
    <property type="term" value="F:acyltransferase activity, transferring groups other than amino-acyl groups"/>
    <property type="evidence" value="ECO:0000318"/>
    <property type="project" value="GO_Central"/>
</dbReference>
<dbReference type="GO" id="GO:0033816">
    <property type="term" value="F:diaminobutyrate acetyltransferase activity"/>
    <property type="evidence" value="ECO:0007669"/>
    <property type="project" value="UniProtKB-EC"/>
</dbReference>
<dbReference type="GO" id="GO:0019491">
    <property type="term" value="P:ectoine biosynthetic process"/>
    <property type="evidence" value="ECO:0007669"/>
    <property type="project" value="UniProtKB-UniPathway"/>
</dbReference>
<dbReference type="CDD" id="cd04301">
    <property type="entry name" value="NAT_SF"/>
    <property type="match status" value="1"/>
</dbReference>
<dbReference type="Gene3D" id="3.40.630.30">
    <property type="match status" value="1"/>
</dbReference>
<dbReference type="InterPro" id="IPR016181">
    <property type="entry name" value="Acyl_CoA_acyltransferase"/>
</dbReference>
<dbReference type="InterPro" id="IPR012772">
    <property type="entry name" value="Ectoine_EctA"/>
</dbReference>
<dbReference type="InterPro" id="IPR000182">
    <property type="entry name" value="GNAT_dom"/>
</dbReference>
<dbReference type="NCBIfam" id="TIGR02406">
    <property type="entry name" value="ectoine_EctA"/>
    <property type="match status" value="1"/>
</dbReference>
<dbReference type="Pfam" id="PF00583">
    <property type="entry name" value="Acetyltransf_1"/>
    <property type="match status" value="1"/>
</dbReference>
<dbReference type="SUPFAM" id="SSF55729">
    <property type="entry name" value="Acyl-CoA N-acyltransferases (Nat)"/>
    <property type="match status" value="1"/>
</dbReference>
<dbReference type="PROSITE" id="PS51186">
    <property type="entry name" value="GNAT"/>
    <property type="match status" value="1"/>
</dbReference>
<organism>
    <name type="scientific">Streptomyces coelicolor (strain ATCC BAA-471 / A3(2) / M145)</name>
    <dbReference type="NCBI Taxonomy" id="100226"/>
    <lineage>
        <taxon>Bacteria</taxon>
        <taxon>Bacillati</taxon>
        <taxon>Actinomycetota</taxon>
        <taxon>Actinomycetes</taxon>
        <taxon>Kitasatosporales</taxon>
        <taxon>Streptomycetaceae</taxon>
        <taxon>Streptomyces</taxon>
        <taxon>Streptomyces albidoflavus group</taxon>
    </lineage>
</organism>
<accession>Q93RW2</accession>
<feature type="chain" id="PRO_0000220092" description="L-2,4-diaminobutyric acid acetyltransferase">
    <location>
        <begin position="1"/>
        <end position="170"/>
    </location>
</feature>
<feature type="domain" description="N-acetyltransferase" evidence="2">
    <location>
        <begin position="8"/>
        <end position="166"/>
    </location>
</feature>
<gene>
    <name type="primary">ectA</name>
    <name type="ordered locus">SCO1864</name>
    <name type="ORF">SCI39.11</name>
</gene>
<sequence>MTAAQADLQIDRPRVADGAALWRIARDSEVLDLNSSYSYLLWCRDFAATSAVVRDGHGVPVGFITGYVRPDSPDTLLVWQVAVDGTYRGRGLAATLVDGLADRVARERGITILETTISPDNTASQRLFTSFAERRGARLEREVLFDTAVFPDGPHEPEVLYRIGPLSAGG</sequence>
<evidence type="ECO:0000250" key="1"/>
<evidence type="ECO:0000255" key="2">
    <source>
        <dbReference type="PROSITE-ProRule" id="PRU00532"/>
    </source>
</evidence>
<evidence type="ECO:0000305" key="3"/>
<name>ECTA_STRCO</name>
<proteinExistence type="inferred from homology"/>
<reference key="1">
    <citation type="journal article" date="2002" name="Nature">
        <title>Complete genome sequence of the model actinomycete Streptomyces coelicolor A3(2).</title>
        <authorList>
            <person name="Bentley S.D."/>
            <person name="Chater K.F."/>
            <person name="Cerdeno-Tarraga A.-M."/>
            <person name="Challis G.L."/>
            <person name="Thomson N.R."/>
            <person name="James K.D."/>
            <person name="Harris D.E."/>
            <person name="Quail M.A."/>
            <person name="Kieser H."/>
            <person name="Harper D."/>
            <person name="Bateman A."/>
            <person name="Brown S."/>
            <person name="Chandra G."/>
            <person name="Chen C.W."/>
            <person name="Collins M."/>
            <person name="Cronin A."/>
            <person name="Fraser A."/>
            <person name="Goble A."/>
            <person name="Hidalgo J."/>
            <person name="Hornsby T."/>
            <person name="Howarth S."/>
            <person name="Huang C.-H."/>
            <person name="Kieser T."/>
            <person name="Larke L."/>
            <person name="Murphy L.D."/>
            <person name="Oliver K."/>
            <person name="O'Neil S."/>
            <person name="Rabbinowitsch E."/>
            <person name="Rajandream M.A."/>
            <person name="Rutherford K.M."/>
            <person name="Rutter S."/>
            <person name="Seeger K."/>
            <person name="Saunders D."/>
            <person name="Sharp S."/>
            <person name="Squares R."/>
            <person name="Squares S."/>
            <person name="Taylor K."/>
            <person name="Warren T."/>
            <person name="Wietzorrek A."/>
            <person name="Woodward J.R."/>
            <person name="Barrell B.G."/>
            <person name="Parkhill J."/>
            <person name="Hopwood D.A."/>
        </authorList>
    </citation>
    <scope>NUCLEOTIDE SEQUENCE [LARGE SCALE GENOMIC DNA]</scope>
    <source>
        <strain>ATCC BAA-471 / A3(2) / M145</strain>
    </source>
</reference>
<protein>
    <recommendedName>
        <fullName>L-2,4-diaminobutyric acid acetyltransferase</fullName>
        <shortName>DABA acetyltransferase</shortName>
        <ecNumber>2.3.1.178</ecNumber>
    </recommendedName>
</protein>
<comment type="function">
    <text evidence="1">Catalyzes the acetylation of L-2,4-diaminobutyrate (DABA) to gamma-N-acetyl-alpha,gamma-diaminobutyric acid (ADABA) with acetyl coenzyme A.</text>
</comment>
<comment type="catalytic activity">
    <reaction>
        <text>L-2,4-diaminobutanoate + acetyl-CoA = (2S)-4-acetamido-2-aminobutanoate + CoA + H(+)</text>
        <dbReference type="Rhea" id="RHEA:16901"/>
        <dbReference type="ChEBI" id="CHEBI:15378"/>
        <dbReference type="ChEBI" id="CHEBI:57287"/>
        <dbReference type="ChEBI" id="CHEBI:57288"/>
        <dbReference type="ChEBI" id="CHEBI:58761"/>
        <dbReference type="ChEBI" id="CHEBI:58929"/>
        <dbReference type="EC" id="2.3.1.178"/>
    </reaction>
</comment>
<comment type="pathway">
    <text>Amine and polyamine biosynthesis; ectoine biosynthesis; L-ectoine from L-aspartate 4-semialdehyde: step 2/3.</text>
</comment>
<comment type="similarity">
    <text evidence="3">Belongs to the acetyltransferase family. EctA subfamily.</text>
</comment>
<keyword id="KW-0012">Acyltransferase</keyword>
<keyword id="KW-1185">Reference proteome</keyword>
<keyword id="KW-0808">Transferase</keyword>